<organism>
    <name type="scientific">Brucella abortus biovar 1 (strain 9-941)</name>
    <dbReference type="NCBI Taxonomy" id="262698"/>
    <lineage>
        <taxon>Bacteria</taxon>
        <taxon>Pseudomonadati</taxon>
        <taxon>Pseudomonadota</taxon>
        <taxon>Alphaproteobacteria</taxon>
        <taxon>Hyphomicrobiales</taxon>
        <taxon>Brucellaceae</taxon>
        <taxon>Brucella/Ochrobactrum group</taxon>
        <taxon>Brucella</taxon>
    </lineage>
</organism>
<gene>
    <name evidence="1" type="primary">aroQ</name>
    <name type="synonym">aroD</name>
    <name type="ordered locus">BruAb1_0919</name>
</gene>
<accession>P0C101</accession>
<accession>Q57DK1</accession>
<accession>Q9AGU9</accession>
<keyword id="KW-0028">Amino-acid biosynthesis</keyword>
<keyword id="KW-0057">Aromatic amino acid biosynthesis</keyword>
<keyword id="KW-0456">Lyase</keyword>
<protein>
    <recommendedName>
        <fullName evidence="1">3-dehydroquinate dehydratase</fullName>
        <shortName evidence="1">3-dehydroquinase</shortName>
        <ecNumber evidence="1">4.2.1.10</ecNumber>
    </recommendedName>
    <alternativeName>
        <fullName evidence="1">Type II DHQase</fullName>
    </alternativeName>
</protein>
<dbReference type="EC" id="4.2.1.10" evidence="1"/>
<dbReference type="EMBL" id="AE017223">
    <property type="protein sequence ID" value="AAX74283.1"/>
    <property type="molecule type" value="Genomic_DNA"/>
</dbReference>
<dbReference type="RefSeq" id="WP_002966789.1">
    <property type="nucleotide sequence ID" value="NC_006932.1"/>
</dbReference>
<dbReference type="SMR" id="P0C101"/>
<dbReference type="EnsemblBacteria" id="AAX74283">
    <property type="protein sequence ID" value="AAX74283"/>
    <property type="gene ID" value="BruAb1_0919"/>
</dbReference>
<dbReference type="GeneID" id="93016716"/>
<dbReference type="KEGG" id="bmb:BruAb1_0919"/>
<dbReference type="HOGENOM" id="CLU_090968_1_0_5"/>
<dbReference type="UniPathway" id="UPA00053">
    <property type="reaction ID" value="UER00086"/>
</dbReference>
<dbReference type="Proteomes" id="UP000000540">
    <property type="component" value="Chromosome I"/>
</dbReference>
<dbReference type="GO" id="GO:0003855">
    <property type="term" value="F:3-dehydroquinate dehydratase activity"/>
    <property type="evidence" value="ECO:0007669"/>
    <property type="project" value="UniProtKB-UniRule"/>
</dbReference>
<dbReference type="GO" id="GO:0008652">
    <property type="term" value="P:amino acid biosynthetic process"/>
    <property type="evidence" value="ECO:0007669"/>
    <property type="project" value="UniProtKB-KW"/>
</dbReference>
<dbReference type="GO" id="GO:0009073">
    <property type="term" value="P:aromatic amino acid family biosynthetic process"/>
    <property type="evidence" value="ECO:0007669"/>
    <property type="project" value="UniProtKB-KW"/>
</dbReference>
<dbReference type="GO" id="GO:0009423">
    <property type="term" value="P:chorismate biosynthetic process"/>
    <property type="evidence" value="ECO:0007669"/>
    <property type="project" value="UniProtKB-UniRule"/>
</dbReference>
<dbReference type="GO" id="GO:0019631">
    <property type="term" value="P:quinate catabolic process"/>
    <property type="evidence" value="ECO:0007669"/>
    <property type="project" value="TreeGrafter"/>
</dbReference>
<dbReference type="CDD" id="cd00466">
    <property type="entry name" value="DHQase_II"/>
    <property type="match status" value="1"/>
</dbReference>
<dbReference type="Gene3D" id="3.40.50.9100">
    <property type="entry name" value="Dehydroquinase, class II"/>
    <property type="match status" value="1"/>
</dbReference>
<dbReference type="HAMAP" id="MF_00169">
    <property type="entry name" value="AroQ"/>
    <property type="match status" value="1"/>
</dbReference>
<dbReference type="InterPro" id="IPR001874">
    <property type="entry name" value="DHquinase_II"/>
</dbReference>
<dbReference type="InterPro" id="IPR018509">
    <property type="entry name" value="DHquinase_II_CS"/>
</dbReference>
<dbReference type="InterPro" id="IPR036441">
    <property type="entry name" value="DHquinase_II_sf"/>
</dbReference>
<dbReference type="NCBIfam" id="TIGR01088">
    <property type="entry name" value="aroQ"/>
    <property type="match status" value="1"/>
</dbReference>
<dbReference type="NCBIfam" id="NF003805">
    <property type="entry name" value="PRK05395.1-2"/>
    <property type="match status" value="1"/>
</dbReference>
<dbReference type="NCBIfam" id="NF003806">
    <property type="entry name" value="PRK05395.1-3"/>
    <property type="match status" value="1"/>
</dbReference>
<dbReference type="NCBIfam" id="NF003807">
    <property type="entry name" value="PRK05395.1-4"/>
    <property type="match status" value="1"/>
</dbReference>
<dbReference type="PANTHER" id="PTHR21272">
    <property type="entry name" value="CATABOLIC 3-DEHYDROQUINASE"/>
    <property type="match status" value="1"/>
</dbReference>
<dbReference type="PANTHER" id="PTHR21272:SF3">
    <property type="entry name" value="CATABOLIC 3-DEHYDROQUINASE"/>
    <property type="match status" value="1"/>
</dbReference>
<dbReference type="Pfam" id="PF01220">
    <property type="entry name" value="DHquinase_II"/>
    <property type="match status" value="1"/>
</dbReference>
<dbReference type="PIRSF" id="PIRSF001399">
    <property type="entry name" value="DHquinase_II"/>
    <property type="match status" value="1"/>
</dbReference>
<dbReference type="SUPFAM" id="SSF52304">
    <property type="entry name" value="Type II 3-dehydroquinate dehydratase"/>
    <property type="match status" value="1"/>
</dbReference>
<dbReference type="PROSITE" id="PS01029">
    <property type="entry name" value="DEHYDROQUINASE_II"/>
    <property type="match status" value="1"/>
</dbReference>
<sequence length="157" mass="16968">MTKTVFVLNGPNLNLLGKREPGIYGVATLDDIEASCKREAGQLELQIDFRQSNHEGDLVSWIQEAGEKNAYVLINPAAYSHTSVAIHDAIRSARVTVVEVHLSNIHAREAFRHHSHVSAVAKGVICGFGAEGYLLGLRALAAIAKEEEKNGQSIKGA</sequence>
<comment type="function">
    <text evidence="1">Catalyzes a trans-dehydration via an enolate intermediate.</text>
</comment>
<comment type="catalytic activity">
    <reaction evidence="1">
        <text>3-dehydroquinate = 3-dehydroshikimate + H2O</text>
        <dbReference type="Rhea" id="RHEA:21096"/>
        <dbReference type="ChEBI" id="CHEBI:15377"/>
        <dbReference type="ChEBI" id="CHEBI:16630"/>
        <dbReference type="ChEBI" id="CHEBI:32364"/>
        <dbReference type="EC" id="4.2.1.10"/>
    </reaction>
</comment>
<comment type="pathway">
    <text evidence="1">Metabolic intermediate biosynthesis; chorismate biosynthesis; chorismate from D-erythrose 4-phosphate and phosphoenolpyruvate: step 3/7.</text>
</comment>
<comment type="subunit">
    <text evidence="1">Homododecamer.</text>
</comment>
<comment type="similarity">
    <text evidence="1">Belongs to the type-II 3-dehydroquinase family.</text>
</comment>
<feature type="chain" id="PRO_0000159879" description="3-dehydroquinate dehydratase">
    <location>
        <begin position="1"/>
        <end position="157"/>
    </location>
</feature>
<feature type="active site" description="Proton acceptor" evidence="1">
    <location>
        <position position="24"/>
    </location>
</feature>
<feature type="active site" description="Proton donor" evidence="1">
    <location>
        <position position="101"/>
    </location>
</feature>
<feature type="binding site" evidence="1">
    <location>
        <position position="75"/>
    </location>
    <ligand>
        <name>substrate</name>
    </ligand>
</feature>
<feature type="binding site" evidence="1">
    <location>
        <position position="81"/>
    </location>
    <ligand>
        <name>substrate</name>
    </ligand>
</feature>
<feature type="binding site" evidence="1">
    <location>
        <position position="88"/>
    </location>
    <ligand>
        <name>substrate</name>
    </ligand>
</feature>
<feature type="binding site" evidence="1">
    <location>
        <begin position="102"/>
        <end position="103"/>
    </location>
    <ligand>
        <name>substrate</name>
    </ligand>
</feature>
<feature type="binding site" evidence="1">
    <location>
        <position position="112"/>
    </location>
    <ligand>
        <name>substrate</name>
    </ligand>
</feature>
<feature type="site" description="Transition state stabilizer" evidence="1">
    <location>
        <position position="19"/>
    </location>
</feature>
<name>AROQ_BRUAB</name>
<reference key="1">
    <citation type="journal article" date="2005" name="J. Bacteriol.">
        <title>Completion of the genome sequence of Brucella abortus and comparison to the highly similar genomes of Brucella melitensis and Brucella suis.</title>
        <authorList>
            <person name="Halling S.M."/>
            <person name="Peterson-Burch B.D."/>
            <person name="Bricker B.J."/>
            <person name="Zuerner R.L."/>
            <person name="Qing Z."/>
            <person name="Li L.-L."/>
            <person name="Kapur V."/>
            <person name="Alt D.P."/>
            <person name="Olsen S.C."/>
        </authorList>
    </citation>
    <scope>NUCLEOTIDE SEQUENCE [LARGE SCALE GENOMIC DNA]</scope>
    <source>
        <strain>9-941</strain>
    </source>
</reference>
<evidence type="ECO:0000255" key="1">
    <source>
        <dbReference type="HAMAP-Rule" id="MF_00169"/>
    </source>
</evidence>
<proteinExistence type="inferred from homology"/>